<name>TRSF_DROVI</name>
<organism>
    <name type="scientific">Drosophila virilis</name>
    <name type="common">Fruit fly</name>
    <dbReference type="NCBI Taxonomy" id="7244"/>
    <lineage>
        <taxon>Eukaryota</taxon>
        <taxon>Metazoa</taxon>
        <taxon>Ecdysozoa</taxon>
        <taxon>Arthropoda</taxon>
        <taxon>Hexapoda</taxon>
        <taxon>Insecta</taxon>
        <taxon>Pterygota</taxon>
        <taxon>Neoptera</taxon>
        <taxon>Endopterygota</taxon>
        <taxon>Diptera</taxon>
        <taxon>Brachycera</taxon>
        <taxon>Muscomorpha</taxon>
        <taxon>Ephydroidea</taxon>
        <taxon>Drosophilidae</taxon>
        <taxon>Drosophila</taxon>
    </lineage>
</organism>
<feature type="chain" id="PRO_0000065647" description="Female-specific protein transformer">
    <location>
        <begin position="1"/>
        <end position="199"/>
    </location>
</feature>
<feature type="region of interest" description="Disordered" evidence="2">
    <location>
        <begin position="1"/>
        <end position="121"/>
    </location>
</feature>
<feature type="region of interest" description="Disordered" evidence="2">
    <location>
        <begin position="178"/>
        <end position="199"/>
    </location>
</feature>
<feature type="compositionally biased region" description="Basic and acidic residues" evidence="2">
    <location>
        <begin position="20"/>
        <end position="37"/>
    </location>
</feature>
<feature type="compositionally biased region" description="Basic residues" evidence="2">
    <location>
        <begin position="56"/>
        <end position="69"/>
    </location>
</feature>
<feature type="compositionally biased region" description="Basic residues" evidence="2">
    <location>
        <begin position="77"/>
        <end position="92"/>
    </location>
</feature>
<feature type="compositionally biased region" description="Basic residues" evidence="2">
    <location>
        <begin position="102"/>
        <end position="119"/>
    </location>
</feature>
<protein>
    <recommendedName>
        <fullName>Female-specific protein transformer</fullName>
    </recommendedName>
</protein>
<gene>
    <name type="primary">tra</name>
</gene>
<proteinExistence type="inferred from homology"/>
<sequence length="199" mass="23809">MDADSSSRSPRDTRRRSRQREKMPYFADEVRERDRVRNLPKLKTTQKRTPTPPRERRSRHERPRSRSRTHSPEQSRCQRRLSRSYVRHRSGSRQKTYSSSCSRRRRSRSRSRSRGRSRTPRIITVPVPVPAAEYSYAYGWPPPRPHFNPMYGALPFGMQPRPLNPYFGAYARPPPFRYRAGPFRPHPRYSYRNDRQAPN</sequence>
<dbReference type="EMBL" id="X66528">
    <property type="protein sequence ID" value="CAA47141.1"/>
    <property type="molecule type" value="Genomic_DNA"/>
</dbReference>
<dbReference type="PIR" id="S26047">
    <property type="entry name" value="S26047"/>
</dbReference>
<dbReference type="eggNOG" id="ENOG502TAUK">
    <property type="taxonomic scope" value="Eukaryota"/>
</dbReference>
<dbReference type="OrthoDB" id="7873072at2759"/>
<dbReference type="GO" id="GO:0016607">
    <property type="term" value="C:nuclear speck"/>
    <property type="evidence" value="ECO:0007669"/>
    <property type="project" value="UniProtKB-SubCell"/>
</dbReference>
<dbReference type="GO" id="GO:0030154">
    <property type="term" value="P:cell differentiation"/>
    <property type="evidence" value="ECO:0007669"/>
    <property type="project" value="UniProtKB-KW"/>
</dbReference>
<dbReference type="GO" id="GO:0046660">
    <property type="term" value="P:female sex differentiation"/>
    <property type="evidence" value="ECO:0007669"/>
    <property type="project" value="InterPro"/>
</dbReference>
<dbReference type="GO" id="GO:0006397">
    <property type="term" value="P:mRNA processing"/>
    <property type="evidence" value="ECO:0007669"/>
    <property type="project" value="InterPro"/>
</dbReference>
<dbReference type="InterPro" id="IPR010519">
    <property type="entry name" value="Tra"/>
</dbReference>
<dbReference type="Pfam" id="PF06495">
    <property type="entry name" value="Transformer"/>
    <property type="match status" value="1"/>
</dbReference>
<accession>Q24761</accession>
<keyword id="KW-0221">Differentiation</keyword>
<keyword id="KW-0539">Nucleus</keyword>
<keyword id="KW-0726">Sexual differentiation</keyword>
<comment type="function">
    <text evidence="3">Member of the regulatory pathway controlling female somatic sexual differentiation, regulated by Sxl. Activates dsx female-specific splicing by promoting the formation of a splicing enhancer complex which consists of tra, tra2 and sr proteins.</text>
</comment>
<comment type="subcellular location">
    <subcellularLocation>
        <location evidence="1">Nucleus speckle</location>
    </subcellularLocation>
    <text evidence="1">Speckled subnuclear compartment.</text>
</comment>
<comment type="domain">
    <text evidence="1">RS domain directs localization of proteins to the speckled subnuclear compartment and the purpose of this localization is to allow colocalization and co-concentration of components of the splicing and splicing regulatory machinery to permit relatively high rates and/or efficiencies of reaction and interaction.</text>
</comment>
<comment type="miscellaneous">
    <text>The sexual regulation of tra occurs through a mechanism of sex-specific alternative RNA splicing. The non-sex-specific RNA expressed in males is not translated.</text>
</comment>
<evidence type="ECO:0000250" key="1"/>
<evidence type="ECO:0000256" key="2">
    <source>
        <dbReference type="SAM" id="MobiDB-lite"/>
    </source>
</evidence>
<evidence type="ECO:0000269" key="3">
    <source>
    </source>
</evidence>
<reference key="1">
    <citation type="journal article" date="1992" name="Genetics">
        <title>Interspecific comparison of the transformer gene of Drosophila reveals an unusually high degree of evolutionary divergence.</title>
        <authorList>
            <person name="O'Neil M.T."/>
            <person name="Belote J.M."/>
        </authorList>
    </citation>
    <scope>NUCLEOTIDE SEQUENCE [GENOMIC DNA]</scope>
    <scope>FUNCTION</scope>
</reference>